<evidence type="ECO:0000255" key="1">
    <source>
        <dbReference type="HAMAP-Rule" id="MF_01425"/>
    </source>
</evidence>
<feature type="chain" id="PRO_1000024331" description="Cation-efflux pump FieF">
    <location>
        <begin position="1"/>
        <end position="300"/>
    </location>
</feature>
<feature type="transmembrane region" description="Helical" evidence="1">
    <location>
        <begin position="12"/>
        <end position="32"/>
    </location>
</feature>
<feature type="transmembrane region" description="Helical" evidence="1">
    <location>
        <begin position="39"/>
        <end position="59"/>
    </location>
</feature>
<feature type="transmembrane region" description="Helical" evidence="1">
    <location>
        <begin position="82"/>
        <end position="102"/>
    </location>
</feature>
<feature type="transmembrane region" description="Helical" evidence="1">
    <location>
        <begin position="114"/>
        <end position="134"/>
    </location>
</feature>
<feature type="transmembrane region" description="Helical" evidence="1">
    <location>
        <begin position="156"/>
        <end position="176"/>
    </location>
</feature>
<feature type="transmembrane region" description="Helical" evidence="1">
    <location>
        <begin position="178"/>
        <end position="198"/>
    </location>
</feature>
<feature type="binding site" evidence="1">
    <location>
        <position position="45"/>
    </location>
    <ligand>
        <name>Zn(2+)</name>
        <dbReference type="ChEBI" id="CHEBI:29105"/>
    </ligand>
</feature>
<feature type="binding site" evidence="1">
    <location>
        <position position="49"/>
    </location>
    <ligand>
        <name>Zn(2+)</name>
        <dbReference type="ChEBI" id="CHEBI:29105"/>
    </ligand>
</feature>
<feature type="binding site" evidence="1">
    <location>
        <position position="153"/>
    </location>
    <ligand>
        <name>Zn(2+)</name>
        <dbReference type="ChEBI" id="CHEBI:29105"/>
    </ligand>
</feature>
<feature type="binding site" evidence="1">
    <location>
        <position position="157"/>
    </location>
    <ligand>
        <name>Zn(2+)</name>
        <dbReference type="ChEBI" id="CHEBI:29105"/>
    </ligand>
</feature>
<comment type="function">
    <text evidence="1">Divalent metal cation transporter which exports Zn(2+), Cd(2+) and possibly Fe(2+). May be involved in zinc and iron detoxification by efflux.</text>
</comment>
<comment type="catalytic activity">
    <reaction evidence="1">
        <text>Zn(2+)(in) + H(+)(out) = Zn(2+)(out) + H(+)(in)</text>
        <dbReference type="Rhea" id="RHEA:28839"/>
        <dbReference type="ChEBI" id="CHEBI:15378"/>
        <dbReference type="ChEBI" id="CHEBI:29105"/>
    </reaction>
</comment>
<comment type="catalytic activity">
    <reaction evidence="1">
        <text>Cd(2+)(in) + H(+)(out) = Cd(2+)(out) + H(+)(in)</text>
        <dbReference type="Rhea" id="RHEA:28739"/>
        <dbReference type="ChEBI" id="CHEBI:15378"/>
        <dbReference type="ChEBI" id="CHEBI:48775"/>
    </reaction>
</comment>
<comment type="catalytic activity">
    <reaction evidence="1">
        <text>Fe(2+)(in) + H(+)(out) = Fe(2+)(out) + H(+)(in)</text>
        <dbReference type="Rhea" id="RHEA:29439"/>
        <dbReference type="ChEBI" id="CHEBI:15378"/>
        <dbReference type="ChEBI" id="CHEBI:29033"/>
    </reaction>
</comment>
<comment type="subunit">
    <text evidence="1">Homodimer.</text>
</comment>
<comment type="subcellular location">
    <subcellularLocation>
        <location evidence="1">Cell inner membrane</location>
        <topology evidence="1">Multi-pass membrane protein</topology>
    </subcellularLocation>
</comment>
<comment type="similarity">
    <text evidence="1">Belongs to the cation diffusion facilitator (CDF) transporter (TC 2.A.4) family. FieF subfamily.</text>
</comment>
<gene>
    <name evidence="1" type="primary">fieF</name>
    <name type="ordered locus">SSON_4084</name>
</gene>
<accession>Q3YV63</accession>
<protein>
    <recommendedName>
        <fullName evidence="1">Cation-efflux pump FieF</fullName>
    </recommendedName>
</protein>
<reference key="1">
    <citation type="journal article" date="2005" name="Nucleic Acids Res.">
        <title>Genome dynamics and diversity of Shigella species, the etiologic agents of bacillary dysentery.</title>
        <authorList>
            <person name="Yang F."/>
            <person name="Yang J."/>
            <person name="Zhang X."/>
            <person name="Chen L."/>
            <person name="Jiang Y."/>
            <person name="Yan Y."/>
            <person name="Tang X."/>
            <person name="Wang J."/>
            <person name="Xiong Z."/>
            <person name="Dong J."/>
            <person name="Xue Y."/>
            <person name="Zhu Y."/>
            <person name="Xu X."/>
            <person name="Sun L."/>
            <person name="Chen S."/>
            <person name="Nie H."/>
            <person name="Peng J."/>
            <person name="Xu J."/>
            <person name="Wang Y."/>
            <person name="Yuan Z."/>
            <person name="Wen Y."/>
            <person name="Yao Z."/>
            <person name="Shen Y."/>
            <person name="Qiang B."/>
            <person name="Hou Y."/>
            <person name="Yu J."/>
            <person name="Jin Q."/>
        </authorList>
    </citation>
    <scope>NUCLEOTIDE SEQUENCE [LARGE SCALE GENOMIC DNA]</scope>
    <source>
        <strain>Ss046</strain>
    </source>
</reference>
<name>FIEF_SHISS</name>
<sequence length="300" mass="32913">MNQSYGRLVSRAAIAATAMASLLLLIKIFAWWYTGSVSILAALVDSLVDIGASLTNLLVVRYSLQPADDNHSFGHGKAESLAALAQSMFISGSALFLFLTGIQHLVSPTPMTDPGVGVIVTIVALICTIILVSFQRWVVRRTQSQAVRADMLHYQSDVMMNGAILLALGLSWYGWHRADALFALGIGIYILYSALRMGYEAVQSLLDRALPDEERQEIIDIVTSWPGVSGAHDLRTRQSGPTRFIQIHLEMEDSLPLVQAHMVADQVEQAILRRFPGSDVIIHQDPCSVVPREGKRSMLS</sequence>
<keyword id="KW-0997">Cell inner membrane</keyword>
<keyword id="KW-1003">Cell membrane</keyword>
<keyword id="KW-0406">Ion transport</keyword>
<keyword id="KW-0408">Iron</keyword>
<keyword id="KW-0410">Iron transport</keyword>
<keyword id="KW-0472">Membrane</keyword>
<keyword id="KW-0479">Metal-binding</keyword>
<keyword id="KW-1185">Reference proteome</keyword>
<keyword id="KW-0812">Transmembrane</keyword>
<keyword id="KW-1133">Transmembrane helix</keyword>
<keyword id="KW-0813">Transport</keyword>
<keyword id="KW-0862">Zinc</keyword>
<keyword id="KW-0864">Zinc transport</keyword>
<organism>
    <name type="scientific">Shigella sonnei (strain Ss046)</name>
    <dbReference type="NCBI Taxonomy" id="300269"/>
    <lineage>
        <taxon>Bacteria</taxon>
        <taxon>Pseudomonadati</taxon>
        <taxon>Pseudomonadota</taxon>
        <taxon>Gammaproteobacteria</taxon>
        <taxon>Enterobacterales</taxon>
        <taxon>Enterobacteriaceae</taxon>
        <taxon>Shigella</taxon>
    </lineage>
</organism>
<dbReference type="EMBL" id="CP000038">
    <property type="protein sequence ID" value="AAZ90599.1"/>
    <property type="molecule type" value="Genomic_DNA"/>
</dbReference>
<dbReference type="RefSeq" id="WP_001076748.1">
    <property type="nucleotide sequence ID" value="NC_007384.1"/>
</dbReference>
<dbReference type="SMR" id="Q3YV63"/>
<dbReference type="GeneID" id="93777983"/>
<dbReference type="KEGG" id="ssn:SSON_4084"/>
<dbReference type="HOGENOM" id="CLU_013430_3_0_6"/>
<dbReference type="Proteomes" id="UP000002529">
    <property type="component" value="Chromosome"/>
</dbReference>
<dbReference type="GO" id="GO:0005886">
    <property type="term" value="C:plasma membrane"/>
    <property type="evidence" value="ECO:0007669"/>
    <property type="project" value="UniProtKB-SubCell"/>
</dbReference>
<dbReference type="GO" id="GO:0015086">
    <property type="term" value="F:cadmium ion transmembrane transporter activity"/>
    <property type="evidence" value="ECO:0007669"/>
    <property type="project" value="UniProtKB-UniRule"/>
</dbReference>
<dbReference type="GO" id="GO:0015093">
    <property type="term" value="F:ferrous iron transmembrane transporter activity"/>
    <property type="evidence" value="ECO:0007669"/>
    <property type="project" value="TreeGrafter"/>
</dbReference>
<dbReference type="GO" id="GO:0046872">
    <property type="term" value="F:metal ion binding"/>
    <property type="evidence" value="ECO:0007669"/>
    <property type="project" value="UniProtKB-KW"/>
</dbReference>
<dbReference type="GO" id="GO:0015341">
    <property type="term" value="F:zinc efflux antiporter activity"/>
    <property type="evidence" value="ECO:0007669"/>
    <property type="project" value="TreeGrafter"/>
</dbReference>
<dbReference type="GO" id="GO:0006882">
    <property type="term" value="P:intracellular zinc ion homeostasis"/>
    <property type="evidence" value="ECO:0007669"/>
    <property type="project" value="TreeGrafter"/>
</dbReference>
<dbReference type="FunFam" id="1.20.1510.10:FF:000001">
    <property type="entry name" value="Ferrous-iron efflux pump FieF"/>
    <property type="match status" value="1"/>
</dbReference>
<dbReference type="FunFam" id="3.30.70.1350:FF:000002">
    <property type="entry name" value="Ferrous-iron efflux pump FieF"/>
    <property type="match status" value="1"/>
</dbReference>
<dbReference type="Gene3D" id="1.20.1510.10">
    <property type="entry name" value="Cation efflux protein transmembrane domain"/>
    <property type="match status" value="1"/>
</dbReference>
<dbReference type="Gene3D" id="3.30.70.1350">
    <property type="entry name" value="Cation efflux protein, cytoplasmic domain"/>
    <property type="match status" value="1"/>
</dbReference>
<dbReference type="HAMAP" id="MF_01425">
    <property type="entry name" value="Cation_efflux_FieF"/>
    <property type="match status" value="1"/>
</dbReference>
<dbReference type="InterPro" id="IPR002524">
    <property type="entry name" value="Cation_efflux"/>
</dbReference>
<dbReference type="InterPro" id="IPR027470">
    <property type="entry name" value="Cation_efflux_CTD"/>
</dbReference>
<dbReference type="InterPro" id="IPR036837">
    <property type="entry name" value="Cation_efflux_CTD_sf"/>
</dbReference>
<dbReference type="InterPro" id="IPR023783">
    <property type="entry name" value="Cation_efflux_FieF"/>
</dbReference>
<dbReference type="InterPro" id="IPR027469">
    <property type="entry name" value="Cation_efflux_TMD_sf"/>
</dbReference>
<dbReference type="InterPro" id="IPR050291">
    <property type="entry name" value="CDF_Transporter"/>
</dbReference>
<dbReference type="NCBIfam" id="TIGR01297">
    <property type="entry name" value="CDF"/>
    <property type="match status" value="1"/>
</dbReference>
<dbReference type="NCBIfam" id="NF007064">
    <property type="entry name" value="PRK09509.1"/>
    <property type="match status" value="1"/>
</dbReference>
<dbReference type="PANTHER" id="PTHR43840:SF41">
    <property type="entry name" value="CATION-EFFLUX PUMP FIEF"/>
    <property type="match status" value="1"/>
</dbReference>
<dbReference type="PANTHER" id="PTHR43840">
    <property type="entry name" value="MITOCHONDRIAL METAL TRANSPORTER 1-RELATED"/>
    <property type="match status" value="1"/>
</dbReference>
<dbReference type="Pfam" id="PF01545">
    <property type="entry name" value="Cation_efflux"/>
    <property type="match status" value="1"/>
</dbReference>
<dbReference type="Pfam" id="PF16916">
    <property type="entry name" value="ZT_dimer"/>
    <property type="match status" value="1"/>
</dbReference>
<dbReference type="SUPFAM" id="SSF160240">
    <property type="entry name" value="Cation efflux protein cytoplasmic domain-like"/>
    <property type="match status" value="1"/>
</dbReference>
<dbReference type="SUPFAM" id="SSF161111">
    <property type="entry name" value="Cation efflux protein transmembrane domain-like"/>
    <property type="match status" value="1"/>
</dbReference>
<proteinExistence type="inferred from homology"/>